<evidence type="ECO:0000255" key="1">
    <source>
        <dbReference type="HAMAP-Rule" id="MF_01368"/>
    </source>
</evidence>
<evidence type="ECO:0000305" key="2"/>
<proteinExistence type="inferred from homology"/>
<gene>
    <name evidence="1" type="primary">rplQ</name>
    <name type="ordered locus">DICTH_0865</name>
</gene>
<reference key="1">
    <citation type="journal article" date="2014" name="Genome Announc.">
        <title>Complete Genome Sequence of the Extreme Thermophile Dictyoglomus thermophilum H-6-12.</title>
        <authorList>
            <person name="Coil D.A."/>
            <person name="Badger J.H."/>
            <person name="Forberger H.C."/>
            <person name="Riggs F."/>
            <person name="Madupu R."/>
            <person name="Fedorova N."/>
            <person name="Ward N."/>
            <person name="Robb F.T."/>
            <person name="Eisen J.A."/>
        </authorList>
    </citation>
    <scope>NUCLEOTIDE SEQUENCE [LARGE SCALE GENOMIC DNA]</scope>
    <source>
        <strain>ATCC 35947 / DSM 3960 / H-6-12</strain>
    </source>
</reference>
<comment type="subunit">
    <text evidence="1">Part of the 50S ribosomal subunit. Contacts protein L32.</text>
</comment>
<comment type="similarity">
    <text evidence="1">Belongs to the bacterial ribosomal protein bL17 family.</text>
</comment>
<name>RL17_DICT6</name>
<organism>
    <name type="scientific">Dictyoglomus thermophilum (strain ATCC 35947 / DSM 3960 / H-6-12)</name>
    <dbReference type="NCBI Taxonomy" id="309799"/>
    <lineage>
        <taxon>Bacteria</taxon>
        <taxon>Pseudomonadati</taxon>
        <taxon>Dictyoglomota</taxon>
        <taxon>Dictyoglomia</taxon>
        <taxon>Dictyoglomales</taxon>
        <taxon>Dictyoglomaceae</taxon>
        <taxon>Dictyoglomus</taxon>
    </lineage>
</organism>
<keyword id="KW-0687">Ribonucleoprotein</keyword>
<keyword id="KW-0689">Ribosomal protein</keyword>
<protein>
    <recommendedName>
        <fullName evidence="1">Large ribosomal subunit protein bL17</fullName>
    </recommendedName>
    <alternativeName>
        <fullName evidence="2">50S ribosomal protein L17</fullName>
    </alternativeName>
</protein>
<accession>B5YDX1</accession>
<feature type="chain" id="PRO_1000144414" description="Large ribosomal subunit protein bL17">
    <location>
        <begin position="1"/>
        <end position="116"/>
    </location>
</feature>
<sequence length="116" mass="13497">MRHRKAYRKLSKPTPQRKALLKALLISLFKHGKIVTTLPRAKEVTRIAEKLLTIAKEDSVHHRRLVYAWLQDRELVRKVFVDIAPKYKDRNGGYTRILKLGMRRGDAAEQAVIELV</sequence>
<dbReference type="EMBL" id="CP001146">
    <property type="protein sequence ID" value="ACI18677.1"/>
    <property type="molecule type" value="Genomic_DNA"/>
</dbReference>
<dbReference type="RefSeq" id="WP_012547309.1">
    <property type="nucleotide sequence ID" value="NC_011297.1"/>
</dbReference>
<dbReference type="SMR" id="B5YDX1"/>
<dbReference type="STRING" id="309799.DICTH_0865"/>
<dbReference type="PaxDb" id="309799-DICTH_0865"/>
<dbReference type="KEGG" id="dth:DICTH_0865"/>
<dbReference type="eggNOG" id="COG0203">
    <property type="taxonomic scope" value="Bacteria"/>
</dbReference>
<dbReference type="HOGENOM" id="CLU_074407_2_0_0"/>
<dbReference type="OrthoDB" id="9809073at2"/>
<dbReference type="Proteomes" id="UP000001733">
    <property type="component" value="Chromosome"/>
</dbReference>
<dbReference type="GO" id="GO:0022625">
    <property type="term" value="C:cytosolic large ribosomal subunit"/>
    <property type="evidence" value="ECO:0007669"/>
    <property type="project" value="TreeGrafter"/>
</dbReference>
<dbReference type="GO" id="GO:0003735">
    <property type="term" value="F:structural constituent of ribosome"/>
    <property type="evidence" value="ECO:0007669"/>
    <property type="project" value="InterPro"/>
</dbReference>
<dbReference type="GO" id="GO:0006412">
    <property type="term" value="P:translation"/>
    <property type="evidence" value="ECO:0007669"/>
    <property type="project" value="UniProtKB-UniRule"/>
</dbReference>
<dbReference type="FunFam" id="3.90.1030.10:FF:000003">
    <property type="entry name" value="50S ribosomal protein L17"/>
    <property type="match status" value="1"/>
</dbReference>
<dbReference type="Gene3D" id="3.90.1030.10">
    <property type="entry name" value="Ribosomal protein L17"/>
    <property type="match status" value="1"/>
</dbReference>
<dbReference type="HAMAP" id="MF_01368">
    <property type="entry name" value="Ribosomal_bL17"/>
    <property type="match status" value="1"/>
</dbReference>
<dbReference type="InterPro" id="IPR000456">
    <property type="entry name" value="Ribosomal_bL17"/>
</dbReference>
<dbReference type="InterPro" id="IPR047859">
    <property type="entry name" value="Ribosomal_bL17_CS"/>
</dbReference>
<dbReference type="InterPro" id="IPR036373">
    <property type="entry name" value="Ribosomal_bL17_sf"/>
</dbReference>
<dbReference type="NCBIfam" id="TIGR00059">
    <property type="entry name" value="L17"/>
    <property type="match status" value="1"/>
</dbReference>
<dbReference type="PANTHER" id="PTHR14413:SF16">
    <property type="entry name" value="LARGE RIBOSOMAL SUBUNIT PROTEIN BL17M"/>
    <property type="match status" value="1"/>
</dbReference>
<dbReference type="PANTHER" id="PTHR14413">
    <property type="entry name" value="RIBOSOMAL PROTEIN L17"/>
    <property type="match status" value="1"/>
</dbReference>
<dbReference type="Pfam" id="PF01196">
    <property type="entry name" value="Ribosomal_L17"/>
    <property type="match status" value="1"/>
</dbReference>
<dbReference type="SUPFAM" id="SSF64263">
    <property type="entry name" value="Prokaryotic ribosomal protein L17"/>
    <property type="match status" value="1"/>
</dbReference>
<dbReference type="PROSITE" id="PS01167">
    <property type="entry name" value="RIBOSOMAL_L17"/>
    <property type="match status" value="1"/>
</dbReference>